<evidence type="ECO:0000256" key="1">
    <source>
        <dbReference type="SAM" id="MobiDB-lite"/>
    </source>
</evidence>
<organismHost>
    <name type="scientific">Homo sapiens</name>
    <name type="common">Human</name>
    <dbReference type="NCBI Taxonomy" id="9606"/>
</organismHost>
<protein>
    <recommendedName>
        <fullName>Protein US1</fullName>
    </recommendedName>
</protein>
<dbReference type="EMBL" id="AY446894">
    <property type="protein sequence ID" value="AAR31692.1"/>
    <property type="molecule type" value="Genomic_DNA"/>
</dbReference>
<dbReference type="RefSeq" id="YP_081588.1">
    <property type="nucleotide sequence ID" value="NC_006273.2"/>
</dbReference>
<dbReference type="GeneID" id="3077491"/>
<dbReference type="KEGG" id="vg:3077491"/>
<dbReference type="Proteomes" id="UP000000938">
    <property type="component" value="Segment"/>
</dbReference>
<keyword id="KW-1185">Reference proteome</keyword>
<sequence>MASGLGDLSVGVSSLPMRELAWRRVADDSHDLWCCCMDWKAHVEYAHPASELRPGSGGWPEHAEAQWRQQVHAAHDVWCNCGDWQGHALRSRSRTAESGRSSSSSSVSVLSDGDQQPWWRRLRVKRPKFPSWARRWTQRHDSEERASQQAKNDSTS</sequence>
<accession>Q6SW03</accession>
<accession>D2K3U8</accession>
<reference key="1">
    <citation type="journal article" date="2004" name="J. Gen. Virol.">
        <title>Genetic content of wild-type human cytomegalovirus.</title>
        <authorList>
            <person name="Dolan A."/>
            <person name="Cunningham C."/>
            <person name="Hector R.D."/>
            <person name="Hassan-Walker A.F."/>
            <person name="Lee L."/>
            <person name="Addison C."/>
            <person name="Dargan D.J."/>
            <person name="McGeoch D.J."/>
            <person name="Gatherer D."/>
            <person name="Emery V.C."/>
            <person name="Griffiths P.D."/>
            <person name="Sinzger C."/>
            <person name="McSharry B.P."/>
            <person name="Wilkinson G.W.G."/>
            <person name="Davison A.J."/>
        </authorList>
    </citation>
    <scope>NUCLEOTIDE SEQUENCE [LARGE SCALE GENOMIC DNA]</scope>
</reference>
<organism>
    <name type="scientific">Human cytomegalovirus (strain Merlin)</name>
    <name type="common">HHV-5</name>
    <name type="synonym">Human herpesvirus 5</name>
    <dbReference type="NCBI Taxonomy" id="295027"/>
    <lineage>
        <taxon>Viruses</taxon>
        <taxon>Duplodnaviria</taxon>
        <taxon>Heunggongvirae</taxon>
        <taxon>Peploviricota</taxon>
        <taxon>Herviviricetes</taxon>
        <taxon>Herpesvirales</taxon>
        <taxon>Orthoherpesviridae</taxon>
        <taxon>Betaherpesvirinae</taxon>
        <taxon>Cytomegalovirus</taxon>
        <taxon>Cytomegalovirus humanbeta5</taxon>
        <taxon>Human cytomegalovirus</taxon>
    </lineage>
</organism>
<gene>
    <name type="primary">US1</name>
</gene>
<name>US01_HCMVM</name>
<proteinExistence type="predicted"/>
<feature type="chain" id="PRO_0000418291" description="Protein US1">
    <location>
        <begin position="1"/>
        <end position="156"/>
    </location>
</feature>
<feature type="region of interest" description="Disordered" evidence="1">
    <location>
        <begin position="90"/>
        <end position="114"/>
    </location>
</feature>
<feature type="region of interest" description="Disordered" evidence="1">
    <location>
        <begin position="133"/>
        <end position="156"/>
    </location>
</feature>
<feature type="compositionally biased region" description="Low complexity" evidence="1">
    <location>
        <begin position="96"/>
        <end position="111"/>
    </location>
</feature>
<feature type="compositionally biased region" description="Polar residues" evidence="1">
    <location>
        <begin position="147"/>
        <end position="156"/>
    </location>
</feature>